<protein>
    <recommendedName>
        <fullName evidence="1">Leucine--tRNA ligase</fullName>
        <ecNumber evidence="1">6.1.1.4</ecNumber>
    </recommendedName>
    <alternativeName>
        <fullName evidence="1">Leucyl-tRNA synthetase</fullName>
        <shortName evidence="1">LeuRS</shortName>
    </alternativeName>
</protein>
<dbReference type="EC" id="6.1.1.4" evidence="1"/>
<dbReference type="EMBL" id="FM211192">
    <property type="protein sequence ID" value="CAR70125.1"/>
    <property type="molecule type" value="Genomic_DNA"/>
</dbReference>
<dbReference type="SMR" id="B8ZTR5"/>
<dbReference type="KEGG" id="mlb:MLBr00032"/>
<dbReference type="HOGENOM" id="CLU_004427_0_0_11"/>
<dbReference type="Proteomes" id="UP000006900">
    <property type="component" value="Chromosome"/>
</dbReference>
<dbReference type="GO" id="GO:0005829">
    <property type="term" value="C:cytosol"/>
    <property type="evidence" value="ECO:0007669"/>
    <property type="project" value="TreeGrafter"/>
</dbReference>
<dbReference type="GO" id="GO:0002161">
    <property type="term" value="F:aminoacyl-tRNA deacylase activity"/>
    <property type="evidence" value="ECO:0007669"/>
    <property type="project" value="InterPro"/>
</dbReference>
<dbReference type="GO" id="GO:0005524">
    <property type="term" value="F:ATP binding"/>
    <property type="evidence" value="ECO:0007669"/>
    <property type="project" value="UniProtKB-UniRule"/>
</dbReference>
<dbReference type="GO" id="GO:0004823">
    <property type="term" value="F:leucine-tRNA ligase activity"/>
    <property type="evidence" value="ECO:0007669"/>
    <property type="project" value="UniProtKB-UniRule"/>
</dbReference>
<dbReference type="GO" id="GO:0006429">
    <property type="term" value="P:leucyl-tRNA aminoacylation"/>
    <property type="evidence" value="ECO:0007669"/>
    <property type="project" value="UniProtKB-UniRule"/>
</dbReference>
<dbReference type="CDD" id="cd07958">
    <property type="entry name" value="Anticodon_Ia_Leu_BEm"/>
    <property type="match status" value="1"/>
</dbReference>
<dbReference type="FunFam" id="3.40.50.620:FF:000060">
    <property type="entry name" value="Leucine--tRNA ligase"/>
    <property type="match status" value="1"/>
</dbReference>
<dbReference type="FunFam" id="3.40.50.620:FF:000087">
    <property type="entry name" value="Leucine--tRNA ligase"/>
    <property type="match status" value="1"/>
</dbReference>
<dbReference type="FunFam" id="3.90.740.10:FF:000017">
    <property type="entry name" value="Leucine--tRNA ligase"/>
    <property type="match status" value="1"/>
</dbReference>
<dbReference type="FunFam" id="1.10.730.10:FF:000011">
    <property type="entry name" value="Leucine--tRNA ligase chloroplastic/mitochondrial"/>
    <property type="match status" value="1"/>
</dbReference>
<dbReference type="Gene3D" id="3.40.50.620">
    <property type="entry name" value="HUPs"/>
    <property type="match status" value="2"/>
</dbReference>
<dbReference type="Gene3D" id="1.10.730.10">
    <property type="entry name" value="Isoleucyl-tRNA Synthetase, Domain 1"/>
    <property type="match status" value="2"/>
</dbReference>
<dbReference type="Gene3D" id="3.90.740.10">
    <property type="entry name" value="Valyl/Leucyl/Isoleucyl-tRNA synthetase, editing domain"/>
    <property type="match status" value="1"/>
</dbReference>
<dbReference type="HAMAP" id="MF_00049_B">
    <property type="entry name" value="Leu_tRNA_synth_B"/>
    <property type="match status" value="1"/>
</dbReference>
<dbReference type="InterPro" id="IPR001412">
    <property type="entry name" value="aa-tRNA-synth_I_CS"/>
</dbReference>
<dbReference type="InterPro" id="IPR002302">
    <property type="entry name" value="Leu-tRNA-ligase"/>
</dbReference>
<dbReference type="InterPro" id="IPR025709">
    <property type="entry name" value="Leu_tRNA-synth_edit"/>
</dbReference>
<dbReference type="InterPro" id="IPR013155">
    <property type="entry name" value="M/V/L/I-tRNA-synth_anticd-bd"/>
</dbReference>
<dbReference type="InterPro" id="IPR015413">
    <property type="entry name" value="Methionyl/Leucyl_tRNA_Synth"/>
</dbReference>
<dbReference type="InterPro" id="IPR014729">
    <property type="entry name" value="Rossmann-like_a/b/a_fold"/>
</dbReference>
<dbReference type="InterPro" id="IPR009080">
    <property type="entry name" value="tRNAsynth_Ia_anticodon-bd"/>
</dbReference>
<dbReference type="InterPro" id="IPR009008">
    <property type="entry name" value="Val/Leu/Ile-tRNA-synth_edit"/>
</dbReference>
<dbReference type="NCBIfam" id="TIGR00396">
    <property type="entry name" value="leuS_bact"/>
    <property type="match status" value="1"/>
</dbReference>
<dbReference type="PANTHER" id="PTHR43740:SF2">
    <property type="entry name" value="LEUCINE--TRNA LIGASE, MITOCHONDRIAL"/>
    <property type="match status" value="1"/>
</dbReference>
<dbReference type="PANTHER" id="PTHR43740">
    <property type="entry name" value="LEUCYL-TRNA SYNTHETASE"/>
    <property type="match status" value="1"/>
</dbReference>
<dbReference type="Pfam" id="PF08264">
    <property type="entry name" value="Anticodon_1"/>
    <property type="match status" value="1"/>
</dbReference>
<dbReference type="Pfam" id="PF13603">
    <property type="entry name" value="tRNA-synt_1_2"/>
    <property type="match status" value="1"/>
</dbReference>
<dbReference type="Pfam" id="PF09334">
    <property type="entry name" value="tRNA-synt_1g"/>
    <property type="match status" value="1"/>
</dbReference>
<dbReference type="PRINTS" id="PR00985">
    <property type="entry name" value="TRNASYNTHLEU"/>
</dbReference>
<dbReference type="SUPFAM" id="SSF47323">
    <property type="entry name" value="Anticodon-binding domain of a subclass of class I aminoacyl-tRNA synthetases"/>
    <property type="match status" value="1"/>
</dbReference>
<dbReference type="SUPFAM" id="SSF52374">
    <property type="entry name" value="Nucleotidylyl transferase"/>
    <property type="match status" value="1"/>
</dbReference>
<dbReference type="SUPFAM" id="SSF50677">
    <property type="entry name" value="ValRS/IleRS/LeuRS editing domain"/>
    <property type="match status" value="1"/>
</dbReference>
<dbReference type="PROSITE" id="PS00178">
    <property type="entry name" value="AA_TRNA_LIGASE_I"/>
    <property type="match status" value="1"/>
</dbReference>
<comment type="catalytic activity">
    <reaction evidence="1">
        <text>tRNA(Leu) + L-leucine + ATP = L-leucyl-tRNA(Leu) + AMP + diphosphate</text>
        <dbReference type="Rhea" id="RHEA:11688"/>
        <dbReference type="Rhea" id="RHEA-COMP:9613"/>
        <dbReference type="Rhea" id="RHEA-COMP:9622"/>
        <dbReference type="ChEBI" id="CHEBI:30616"/>
        <dbReference type="ChEBI" id="CHEBI:33019"/>
        <dbReference type="ChEBI" id="CHEBI:57427"/>
        <dbReference type="ChEBI" id="CHEBI:78442"/>
        <dbReference type="ChEBI" id="CHEBI:78494"/>
        <dbReference type="ChEBI" id="CHEBI:456215"/>
        <dbReference type="EC" id="6.1.1.4"/>
    </reaction>
</comment>
<comment type="subcellular location">
    <subcellularLocation>
        <location evidence="1">Cytoplasm</location>
    </subcellularLocation>
</comment>
<comment type="similarity">
    <text evidence="1">Belongs to the class-I aminoacyl-tRNA synthetase family.</text>
</comment>
<keyword id="KW-0030">Aminoacyl-tRNA synthetase</keyword>
<keyword id="KW-0067">ATP-binding</keyword>
<keyword id="KW-0963">Cytoplasm</keyword>
<keyword id="KW-0436">Ligase</keyword>
<keyword id="KW-0547">Nucleotide-binding</keyword>
<keyword id="KW-0648">Protein biosynthesis</keyword>
<accession>B8ZTR5</accession>
<name>SYL_MYCLB</name>
<organism>
    <name type="scientific">Mycobacterium leprae (strain Br4923)</name>
    <dbReference type="NCBI Taxonomy" id="561304"/>
    <lineage>
        <taxon>Bacteria</taxon>
        <taxon>Bacillati</taxon>
        <taxon>Actinomycetota</taxon>
        <taxon>Actinomycetes</taxon>
        <taxon>Mycobacteriales</taxon>
        <taxon>Mycobacteriaceae</taxon>
        <taxon>Mycobacterium</taxon>
    </lineage>
</organism>
<evidence type="ECO:0000255" key="1">
    <source>
        <dbReference type="HAMAP-Rule" id="MF_00049"/>
    </source>
</evidence>
<proteinExistence type="inferred from homology"/>
<gene>
    <name evidence="1" type="primary">leuS</name>
    <name type="ordered locus">MLBr00032</name>
</gene>
<reference key="1">
    <citation type="journal article" date="2009" name="Nat. Genet.">
        <title>Comparative genomic and phylogeographic analysis of Mycobacterium leprae.</title>
        <authorList>
            <person name="Monot M."/>
            <person name="Honore N."/>
            <person name="Garnier T."/>
            <person name="Zidane N."/>
            <person name="Sherafi D."/>
            <person name="Paniz-Mondolfi A."/>
            <person name="Matsuoka M."/>
            <person name="Taylor G.M."/>
            <person name="Donoghue H.D."/>
            <person name="Bouwman A."/>
            <person name="Mays S."/>
            <person name="Watson C."/>
            <person name="Lockwood D."/>
            <person name="Khamispour A."/>
            <person name="Dowlati Y."/>
            <person name="Jianping S."/>
            <person name="Rea T.H."/>
            <person name="Vera-Cabrera L."/>
            <person name="Stefani M.M."/>
            <person name="Banu S."/>
            <person name="Macdonald M."/>
            <person name="Sapkota B.R."/>
            <person name="Spencer J.S."/>
            <person name="Thomas J."/>
            <person name="Harshman K."/>
            <person name="Singh P."/>
            <person name="Busso P."/>
            <person name="Gattiker A."/>
            <person name="Rougemont J."/>
            <person name="Brennan P.J."/>
            <person name="Cole S.T."/>
        </authorList>
    </citation>
    <scope>NUCLEOTIDE SEQUENCE [LARGE SCALE GENOMIC DNA]</scope>
    <source>
        <strain>Br4923</strain>
    </source>
</reference>
<sequence>MTELPTTVPGYNSAVAQTDSDAMRYRYTAELAGRIESTWQDNWARLQTFNVPNPVGSLAPPDGSVVPADKLFVQDMFPYPSGDGLHVGHPLGYIATDVYARYFRMTGHNVLHAMGFDAFGLPAEQYAMQTGTHPRILTEANVVNFRHQLGRLGLGHDSRRTFSTTDVEFYKWTQWIFLQIYNAWFDVAANKARPIAELIAEFDSGERRLVDGRDWATLSAGERADVIDNCRLVYRADSMVNWCPGLGTVLANEEVTADGRSDRGNFPVFRKRLRQWMMRITAYADRLLDDLDLLDWPEQVKTMQRNWIGRSSGATVLFSAILSRSDAATTEVDVEVFTTRPDTMFGVTYLVLAPEHNLVDELVATVWPDRTDPRWTYGAATPGAAVAAYRRAIVAKSDLDRQESKEKTGVFLGRYATNPATGKPVPIFVADYVLVGYGTGAVMAVPGHDPRDWDFAHKFHLPIVEVIAGSDISEAAYVGDGVLVNSGYLDGMDVATAQEAITARLESEGRGHARIEFKLRDWLFARQRYWGEPFPIIYDSDGRPHALDEAALPVELPDVPYYSPVLFDPDDADSEPSPPLAKATEWVHVELDLGDGLKPYSRDTNVMPQWAGSSWYELRYTDPHNSERLCAKENEAYWMGPRPTEHGIDDPGGVDLYVGGAEHAVLHLLYARFWHKVLYDLGHVSSREPYRRLINQGYIQAFAYTDAHGSYVPANQVFQRGDGFFCPGPDGEIEVFQEFGKIGKSLKNSVSPDEICDEYGADTLRVYEMSMGPLEASRPWATKDVVGAYRFLQRVWRLVVDERTGETRVVDTAGELDTYTLRTLHRTIAGVSQDYAALRNNTATAKLIEYTNHLTKEHRGSVPRVAVEPLVLMLAPLAPHLAEELWLRLGHTTSLANGPFPQADPAYLVDDTVEYPVQVNGKIRGRIVVAADADYDTLKTVALADDKVQQFLAGATPRKVIVVAGRLISLVI</sequence>
<feature type="chain" id="PRO_1000199216" description="Leucine--tRNA ligase">
    <location>
        <begin position="1"/>
        <end position="972"/>
    </location>
</feature>
<feature type="short sequence motif" description="'HIGH' region">
    <location>
        <begin position="78"/>
        <end position="89"/>
    </location>
</feature>
<feature type="short sequence motif" description="'KMSKS' region">
    <location>
        <begin position="741"/>
        <end position="745"/>
    </location>
</feature>
<feature type="binding site" evidence="1">
    <location>
        <position position="744"/>
    </location>
    <ligand>
        <name>ATP</name>
        <dbReference type="ChEBI" id="CHEBI:30616"/>
    </ligand>
</feature>